<name>ANKS6_DANRE</name>
<evidence type="ECO:0000250" key="1">
    <source>
        <dbReference type="UniProtKB" id="Q68DC2"/>
    </source>
</evidence>
<evidence type="ECO:0000250" key="2">
    <source>
        <dbReference type="UniProtKB" id="Q6GQX6"/>
    </source>
</evidence>
<evidence type="ECO:0000255" key="3">
    <source>
        <dbReference type="PROSITE-ProRule" id="PRU00184"/>
    </source>
</evidence>
<evidence type="ECO:0000256" key="4">
    <source>
        <dbReference type="SAM" id="MobiDB-lite"/>
    </source>
</evidence>
<evidence type="ECO:0000269" key="5">
    <source>
    </source>
</evidence>
<accession>Q5XJ13</accession>
<gene>
    <name type="primary">anks6</name>
    <name type="synonym">samd6</name>
    <name type="ORF">zgc:85964</name>
</gene>
<feature type="chain" id="PRO_0000424414" description="Ankyrin repeat and SAM domain-containing protein 6">
    <location>
        <begin position="1"/>
        <end position="739"/>
    </location>
</feature>
<feature type="repeat" description="ANK 1">
    <location>
        <begin position="1"/>
        <end position="30"/>
    </location>
</feature>
<feature type="repeat" description="ANK 2">
    <location>
        <begin position="57"/>
        <end position="86"/>
    </location>
</feature>
<feature type="repeat" description="ANK 3">
    <location>
        <begin position="91"/>
        <end position="120"/>
    </location>
</feature>
<feature type="repeat" description="ANK 4">
    <location>
        <begin position="124"/>
        <end position="156"/>
    </location>
</feature>
<feature type="repeat" description="ANK 5">
    <location>
        <begin position="158"/>
        <end position="188"/>
    </location>
</feature>
<feature type="repeat" description="ANK 6">
    <location>
        <begin position="192"/>
        <end position="221"/>
    </location>
</feature>
<feature type="repeat" description="ANK 7">
    <location>
        <begin position="226"/>
        <end position="255"/>
    </location>
</feature>
<feature type="repeat" description="ANK 8">
    <location>
        <begin position="259"/>
        <end position="290"/>
    </location>
</feature>
<feature type="domain" description="SAM" evidence="3">
    <location>
        <begin position="643"/>
        <end position="706"/>
    </location>
</feature>
<feature type="region of interest" description="Disordered" evidence="4">
    <location>
        <begin position="295"/>
        <end position="320"/>
    </location>
</feature>
<feature type="region of interest" description="Disordered" evidence="4">
    <location>
        <begin position="449"/>
        <end position="645"/>
    </location>
</feature>
<feature type="compositionally biased region" description="Basic residues" evidence="4">
    <location>
        <begin position="295"/>
        <end position="305"/>
    </location>
</feature>
<feature type="compositionally biased region" description="Polar residues" evidence="4">
    <location>
        <begin position="462"/>
        <end position="478"/>
    </location>
</feature>
<feature type="compositionally biased region" description="Low complexity" evidence="4">
    <location>
        <begin position="490"/>
        <end position="506"/>
    </location>
</feature>
<feature type="compositionally biased region" description="Low complexity" evidence="4">
    <location>
        <begin position="582"/>
        <end position="592"/>
    </location>
</feature>
<feature type="compositionally biased region" description="Pro residues" evidence="4">
    <location>
        <begin position="593"/>
        <end position="603"/>
    </location>
</feature>
<feature type="compositionally biased region" description="Low complexity" evidence="4">
    <location>
        <begin position="604"/>
        <end position="641"/>
    </location>
</feature>
<organism>
    <name type="scientific">Danio rerio</name>
    <name type="common">Zebrafish</name>
    <name type="synonym">Brachydanio rerio</name>
    <dbReference type="NCBI Taxonomy" id="7955"/>
    <lineage>
        <taxon>Eukaryota</taxon>
        <taxon>Metazoa</taxon>
        <taxon>Chordata</taxon>
        <taxon>Craniata</taxon>
        <taxon>Vertebrata</taxon>
        <taxon>Euteleostomi</taxon>
        <taxon>Actinopterygii</taxon>
        <taxon>Neopterygii</taxon>
        <taxon>Teleostei</taxon>
        <taxon>Ostariophysi</taxon>
        <taxon>Cypriniformes</taxon>
        <taxon>Danionidae</taxon>
        <taxon>Danioninae</taxon>
        <taxon>Danio</taxon>
    </lineage>
</organism>
<reference key="1">
    <citation type="submission" date="2004-10" db="EMBL/GenBank/DDBJ databases">
        <authorList>
            <consortium name="NIH - Zebrafish Gene Collection (ZGC) project"/>
        </authorList>
    </citation>
    <scope>NUCLEOTIDE SEQUENCE [LARGE SCALE MRNA]</scope>
    <source>
        <tissue>Embryo</tissue>
    </source>
</reference>
<reference key="2">
    <citation type="journal article" date="2013" name="Nat. Genet.">
        <title>ANKS6 is a central component of a nephronophthisis module linking NEK8 to INVS and NPHP3.</title>
        <authorList>
            <person name="Hoff S."/>
            <person name="Halbritter J."/>
            <person name="Epting D."/>
            <person name="Frank V."/>
            <person name="Nguyen T.M."/>
            <person name="van Reeuwijk J."/>
            <person name="Boehlke C."/>
            <person name="Schell C."/>
            <person name="Yasunaga T."/>
            <person name="Helmstadter M."/>
            <person name="Mergen M."/>
            <person name="Filhol E."/>
            <person name="Boldt K."/>
            <person name="Horn N."/>
            <person name="Ueffing M."/>
            <person name="Otto E.A."/>
            <person name="Eisenberger T."/>
            <person name="Elting M.W."/>
            <person name="van Wijk J.A."/>
            <person name="Bockenhauer D."/>
            <person name="Sebire N.J."/>
            <person name="Rittig S."/>
            <person name="Vyberg M."/>
            <person name="Ring T."/>
            <person name="Pohl M."/>
            <person name="Pape L."/>
            <person name="Neuhaus T.J."/>
            <person name="Elshakhs N.A."/>
            <person name="Koon S.J."/>
            <person name="Harris P.C."/>
            <person name="Grahammer F."/>
            <person name="Huber T.B."/>
            <person name="Kuehn E.W."/>
            <person name="Kramer-Zucker A."/>
            <person name="Bolz H.J."/>
            <person name="Roepman R."/>
            <person name="Saunier S."/>
            <person name="Walz G."/>
            <person name="Hildebrandt F."/>
            <person name="Bergmann C."/>
            <person name="Lienkamp S.S."/>
        </authorList>
    </citation>
    <scope>DISRUPTION PHENOTYPE</scope>
</reference>
<sequence length="739" mass="78530">MGASVLAMAARGGHTHTVKLLLENGAFVDDCEHACVSEGNTNTHCSAGSVQEARALLEVRALLAAAQHGQGAAVALLLDWGSDARVCHTGTGWSALMLAAAGGSLSVCQQLVERGADPDHTNVLGNTALEVALQLRRRDVQKYLDNITSVRPRPDDEKKRPDVFHALKLGNAQLVKEIVEQDAAQVDVCNADGASPLMMAAVSGQLEVVQLLVEKRADVDRQDSVHGWTALMQATYHGNKEVVKFLLSQGADVQLRAKNGYTAFDLVMLLNDPDTELVRLLASVCMLVDKDKSKQRGKSALRRRASAGTPSPPEDKTGLKSWWNRMSNRFRRLKLTHTLRHGLSTNRLAPFPDAADVPLDATMRAEEGGAEVASPTAPPAGAQSTACSRTEDCGLNGTGSGKEDFLITTMLRNGAPLARLPSEQLKAVIPPFLPPSCFEPWSSERCGSLRDARSTHTHSQRPGRSSAGSDTASISRVVNRSIKFPSITKGPSPSNSGSYNSAHSSGGSNGVGGVNRHSDTHNRSGGSAADSVLSQIAAQRKRAAGLMDSRSPAVETPSPAHTPLPDSRPKLELQKRPQSGNSSRSKSTSPTLTPSPSPTPAHTPAPAHTPAHRPTGASADSQGSASTQQRSRSSGGSSSGTITDEDELSGILRKLSLEKYQPIFEEQEVDMEAFLTLTDGDLQELGIRTDGPRQQILAAISELNAGKGRERQILQETIINFQSSFGSSASTPRAATHTH</sequence>
<proteinExistence type="evidence at transcript level"/>
<dbReference type="EMBL" id="BC083503">
    <property type="protein sequence ID" value="AAH83503.1"/>
    <property type="molecule type" value="mRNA"/>
</dbReference>
<dbReference type="RefSeq" id="NP_001005928.1">
    <property type="nucleotide sequence ID" value="NM_001005928.1"/>
</dbReference>
<dbReference type="SMR" id="Q5XJ13"/>
<dbReference type="FunCoup" id="Q5XJ13">
    <property type="interactions" value="1272"/>
</dbReference>
<dbReference type="GeneID" id="449657"/>
<dbReference type="KEGG" id="dre:449657"/>
<dbReference type="AGR" id="ZFIN:ZDB-GENE-041010-213"/>
<dbReference type="CTD" id="203286"/>
<dbReference type="ZFIN" id="ZDB-GENE-041010-213">
    <property type="gene designation" value="anks6"/>
</dbReference>
<dbReference type="InParanoid" id="Q5XJ13"/>
<dbReference type="PhylomeDB" id="Q5XJ13"/>
<dbReference type="PRO" id="PR:Q5XJ13"/>
<dbReference type="Proteomes" id="UP000000437">
    <property type="component" value="Unplaced"/>
</dbReference>
<dbReference type="GO" id="GO:0005929">
    <property type="term" value="C:cilium"/>
    <property type="evidence" value="ECO:0007669"/>
    <property type="project" value="UniProtKB-SubCell"/>
</dbReference>
<dbReference type="GO" id="GO:0005737">
    <property type="term" value="C:cytoplasm"/>
    <property type="evidence" value="ECO:0000318"/>
    <property type="project" value="GO_Central"/>
</dbReference>
<dbReference type="GO" id="GO:0048793">
    <property type="term" value="P:pronephros development"/>
    <property type="evidence" value="ECO:0000315"/>
    <property type="project" value="ZFIN"/>
</dbReference>
<dbReference type="CDD" id="cd09518">
    <property type="entry name" value="SAM_ANKS6"/>
    <property type="match status" value="1"/>
</dbReference>
<dbReference type="FunFam" id="1.10.150.50:FF:000025">
    <property type="entry name" value="Ankyrin repeat and sterile alpha motif domain-containing 6"/>
    <property type="match status" value="1"/>
</dbReference>
<dbReference type="Gene3D" id="1.25.40.20">
    <property type="entry name" value="Ankyrin repeat-containing domain"/>
    <property type="match status" value="2"/>
</dbReference>
<dbReference type="Gene3D" id="1.10.150.50">
    <property type="entry name" value="Transcription Factor, Ets-1"/>
    <property type="match status" value="1"/>
</dbReference>
<dbReference type="InterPro" id="IPR002110">
    <property type="entry name" value="Ankyrin_rpt"/>
</dbReference>
<dbReference type="InterPro" id="IPR036770">
    <property type="entry name" value="Ankyrin_rpt-contain_sf"/>
</dbReference>
<dbReference type="InterPro" id="IPR001660">
    <property type="entry name" value="SAM"/>
</dbReference>
<dbReference type="InterPro" id="IPR013761">
    <property type="entry name" value="SAM/pointed_sf"/>
</dbReference>
<dbReference type="PANTHER" id="PTHR10627:SF70">
    <property type="entry name" value="ANKYRIN REPEAT AND SAM DOMAIN-CONTAINING PROTEIN 6"/>
    <property type="match status" value="1"/>
</dbReference>
<dbReference type="PANTHER" id="PTHR10627">
    <property type="entry name" value="SCP160"/>
    <property type="match status" value="1"/>
</dbReference>
<dbReference type="Pfam" id="PF00023">
    <property type="entry name" value="Ank"/>
    <property type="match status" value="1"/>
</dbReference>
<dbReference type="Pfam" id="PF12796">
    <property type="entry name" value="Ank_2"/>
    <property type="match status" value="2"/>
</dbReference>
<dbReference type="Pfam" id="PF00536">
    <property type="entry name" value="SAM_1"/>
    <property type="match status" value="1"/>
</dbReference>
<dbReference type="PRINTS" id="PR01415">
    <property type="entry name" value="ANKYRIN"/>
</dbReference>
<dbReference type="SMART" id="SM00248">
    <property type="entry name" value="ANK"/>
    <property type="match status" value="5"/>
</dbReference>
<dbReference type="SMART" id="SM00454">
    <property type="entry name" value="SAM"/>
    <property type="match status" value="1"/>
</dbReference>
<dbReference type="SUPFAM" id="SSF48403">
    <property type="entry name" value="Ankyrin repeat"/>
    <property type="match status" value="1"/>
</dbReference>
<dbReference type="SUPFAM" id="SSF47769">
    <property type="entry name" value="SAM/Pointed domain"/>
    <property type="match status" value="1"/>
</dbReference>
<dbReference type="PROSITE" id="PS50297">
    <property type="entry name" value="ANK_REP_REGION"/>
    <property type="match status" value="1"/>
</dbReference>
<dbReference type="PROSITE" id="PS50088">
    <property type="entry name" value="ANK_REPEAT"/>
    <property type="match status" value="4"/>
</dbReference>
<dbReference type="PROSITE" id="PS50105">
    <property type="entry name" value="SAM_DOMAIN"/>
    <property type="match status" value="1"/>
</dbReference>
<comment type="function">
    <text evidence="1">Required for renal function.</text>
</comment>
<comment type="subcellular location">
    <subcellularLocation>
        <location evidence="2">Cell projection</location>
        <location evidence="2">Cilium</location>
    </subcellularLocation>
</comment>
<comment type="disruption phenotype">
    <text evidence="5">Morpholino knockdown of the protein in the embryo causes pronephric cyst formation and laterality defects, including reversed heart looping.</text>
</comment>
<protein>
    <recommendedName>
        <fullName>Ankyrin repeat and SAM domain-containing protein 6</fullName>
    </recommendedName>
    <alternativeName>
        <fullName>Ankyrin repeat domain-containing protein 14</fullName>
    </alternativeName>
    <alternativeName>
        <fullName>SamCystin</fullName>
    </alternativeName>
    <alternativeName>
        <fullName>Sterile alpha motif domain-containing protein 6</fullName>
        <shortName>SAM domain-containing protein 6</shortName>
    </alternativeName>
</protein>
<keyword id="KW-0040">ANK repeat</keyword>
<keyword id="KW-0966">Cell projection</keyword>
<keyword id="KW-0969">Cilium</keyword>
<keyword id="KW-0217">Developmental protein</keyword>
<keyword id="KW-1185">Reference proteome</keyword>
<keyword id="KW-0677">Repeat</keyword>